<name>RLR29_PLAVT</name>
<reference key="1">
    <citation type="journal article" date="2016" name="Front. Microbiol.">
        <title>Studying the mechanism of Plasmopara viticola RxLR effectors on suppressing plant immunity.</title>
        <authorList>
            <person name="Xiang J."/>
            <person name="Li X."/>
            <person name="Wu J."/>
            <person name="Yin L."/>
            <person name="Zhang Y."/>
            <person name="Lu J."/>
        </authorList>
    </citation>
    <scope>NUCLEOTIDE SEQUENCE [MRNA]</scope>
    <scope>INDUCTION</scope>
    <scope>FUNCTION</scope>
    <scope>SUBCELLULAR LOCATION</scope>
    <source>
        <strain>ZJ-1-1</strain>
    </source>
</reference>
<reference key="2">
    <citation type="journal article" date="2015" name="Physiol. Mol. Plant Pathol.">
        <title>Characterization of the secretome of Plasmopara viticola by de novo transcriptome analysis.</title>
        <authorList>
            <person name="Yin L."/>
            <person name="Li X."/>
            <person name="Xiang J."/>
            <person name="Qu J."/>
            <person name="Zhang Y."/>
            <person name="Dry I.B."/>
            <person name="Lu J."/>
        </authorList>
    </citation>
    <scope>IDENTIFICATION</scope>
    <scope>INDUCTION</scope>
    <scope>DOMAIN</scope>
</reference>
<accession>A0A172M473</accession>
<protein>
    <recommendedName>
        <fullName evidence="4">Secreted RxLR effector protein 29</fullName>
    </recommendedName>
</protein>
<proteinExistence type="evidence at transcript level"/>
<feature type="signal peptide" evidence="1">
    <location>
        <begin position="1"/>
        <end position="21"/>
    </location>
</feature>
<feature type="chain" id="PRO_0000446907" description="Secreted RxLR effector protein 29" evidence="1">
    <location>
        <begin position="22"/>
        <end position="120"/>
    </location>
</feature>
<feature type="short sequence motif" description="RxLR-dEER" evidence="6">
    <location>
        <begin position="47"/>
        <end position="64"/>
    </location>
</feature>
<keyword id="KW-1035">Host cytoplasm</keyword>
<keyword id="KW-1048">Host nucleus</keyword>
<keyword id="KW-0964">Secreted</keyword>
<keyword id="KW-0732">Signal</keyword>
<keyword id="KW-0843">Virulence</keyword>
<dbReference type="EMBL" id="KX010959">
    <property type="protein sequence ID" value="ANC73379.1"/>
    <property type="molecule type" value="mRNA"/>
</dbReference>
<dbReference type="GO" id="GO:0005576">
    <property type="term" value="C:extracellular region"/>
    <property type="evidence" value="ECO:0007669"/>
    <property type="project" value="UniProtKB-SubCell"/>
</dbReference>
<dbReference type="GO" id="GO:0030430">
    <property type="term" value="C:host cell cytoplasm"/>
    <property type="evidence" value="ECO:0007669"/>
    <property type="project" value="UniProtKB-SubCell"/>
</dbReference>
<dbReference type="GO" id="GO:0042025">
    <property type="term" value="C:host cell nucleus"/>
    <property type="evidence" value="ECO:0007669"/>
    <property type="project" value="UniProtKB-SubCell"/>
</dbReference>
<gene>
    <name evidence="4" type="primary">RxLR29</name>
</gene>
<evidence type="ECO:0000255" key="1"/>
<evidence type="ECO:0000269" key="2">
    <source>
    </source>
</evidence>
<evidence type="ECO:0000269" key="3">
    <source ref="2"/>
</evidence>
<evidence type="ECO:0000303" key="4">
    <source ref="2"/>
</evidence>
<evidence type="ECO:0000305" key="5"/>
<evidence type="ECO:0000305" key="6">
    <source ref="2"/>
</evidence>
<organism>
    <name type="scientific">Plasmopara viticola</name>
    <name type="common">Downy mildew of grapevine</name>
    <name type="synonym">Botrytis viticola</name>
    <dbReference type="NCBI Taxonomy" id="143451"/>
    <lineage>
        <taxon>Eukaryota</taxon>
        <taxon>Sar</taxon>
        <taxon>Stramenopiles</taxon>
        <taxon>Oomycota</taxon>
        <taxon>Peronosporales</taxon>
        <taxon>Peronosporaceae</taxon>
        <taxon>Plasmopara</taxon>
    </lineage>
</organism>
<sequence>MRRTAFIVLSLVALIAPCVTSVAVEDLAQANNIETNVNPNVKVGSRRHLRSEANGRLAVVDEEKVFRDFCGLGPCFDWLKPQNLGGFIYKFVEWASRDRVNFKLKMLKREHQIPIRKRNQ</sequence>
<comment type="function">
    <text evidence="2">Effector that acts as a broad suppressor of cell death to interrupt plant immunity. Inhibits cell death induced by cell death-inducing proteins, including the PAMP elicitor INF1 from P.infestans.</text>
</comment>
<comment type="subcellular location">
    <subcellularLocation>
        <location evidence="2">Secreted</location>
    </subcellularLocation>
    <subcellularLocation>
        <location evidence="2">Host cytoplasm</location>
    </subcellularLocation>
    <subcellularLocation>
        <location evidence="2">Host nucleus</location>
    </subcellularLocation>
</comment>
<comment type="induction">
    <text evidence="2 3">Expression is up-regulated at later stages of infection.</text>
</comment>
<comment type="domain">
    <text evidence="6">The RxLR-dEER motif acts to carry the protein into the host cell cytoplasm through binding to cell surface phosphatidylinositol-3-phosphate.</text>
</comment>
<comment type="similarity">
    <text evidence="5">Belongs to the RxLR effector family.</text>
</comment>